<organismHost>
    <name type="scientific">Acidianus sp. F28</name>
    <dbReference type="NCBI Taxonomy" id="315458"/>
</organismHost>
<keyword id="KW-0479">Metal-binding</keyword>
<keyword id="KW-1185">Reference proteome</keyword>
<keyword id="KW-0862">Zinc</keyword>
<keyword id="KW-0863">Zinc-finger</keyword>
<dbReference type="EMBL" id="AJ854042">
    <property type="protein sequence ID" value="CAH69395.1"/>
    <property type="molecule type" value="Genomic_DNA"/>
</dbReference>
<dbReference type="RefSeq" id="YP_001496933.1">
    <property type="nucleotide sequence ID" value="NC_009884.1"/>
</dbReference>
<dbReference type="SMR" id="Q573G1"/>
<dbReference type="KEGG" id="vg:5656107"/>
<dbReference type="Proteomes" id="UP000006364">
    <property type="component" value="Genome"/>
</dbReference>
<dbReference type="GO" id="GO:0008270">
    <property type="term" value="F:zinc ion binding"/>
    <property type="evidence" value="ECO:0007669"/>
    <property type="project" value="UniProtKB-KW"/>
</dbReference>
<dbReference type="GO" id="GO:0006355">
    <property type="term" value="P:regulation of DNA-templated transcription"/>
    <property type="evidence" value="ECO:0007669"/>
    <property type="project" value="InterPro"/>
</dbReference>
<dbReference type="CDD" id="cd22231">
    <property type="entry name" value="RHH_NikR_HicB-like"/>
    <property type="match status" value="1"/>
</dbReference>
<dbReference type="Gene3D" id="1.10.1220.10">
    <property type="entry name" value="Met repressor-like"/>
    <property type="match status" value="1"/>
</dbReference>
<dbReference type="InterPro" id="IPR013321">
    <property type="entry name" value="Arc_rbn_hlx_hlx"/>
</dbReference>
<dbReference type="InterPro" id="IPR002145">
    <property type="entry name" value="CopG"/>
</dbReference>
<dbReference type="InterPro" id="IPR010985">
    <property type="entry name" value="Ribbon_hlx_hlx"/>
</dbReference>
<dbReference type="InterPro" id="IPR013087">
    <property type="entry name" value="Znf_C2H2_type"/>
</dbReference>
<dbReference type="Pfam" id="PF01402">
    <property type="entry name" value="RHH_1"/>
    <property type="match status" value="1"/>
</dbReference>
<dbReference type="SUPFAM" id="SSF47598">
    <property type="entry name" value="Ribbon-helix-helix"/>
    <property type="match status" value="1"/>
</dbReference>
<dbReference type="PROSITE" id="PS00028">
    <property type="entry name" value="ZINC_FINGER_C2H2_1"/>
    <property type="match status" value="1"/>
</dbReference>
<dbReference type="PROSITE" id="PS50157">
    <property type="entry name" value="ZINC_FINGER_C2H2_2"/>
    <property type="match status" value="1"/>
</dbReference>
<name>Y104B_AFV2P</name>
<organism>
    <name type="scientific">Acidianus filamentous virus 2 (isolate Italy/Pozzuoli)</name>
    <name type="common">AFV-2</name>
    <dbReference type="NCBI Taxonomy" id="654910"/>
    <lineage>
        <taxon>Viruses</taxon>
        <taxon>Adnaviria</taxon>
        <taxon>Zilligvirae</taxon>
        <taxon>Taleaviricota</taxon>
        <taxon>Tokiviricetes</taxon>
        <taxon>Ligamenvirales</taxon>
        <taxon>Lipothrixviridae</taxon>
        <taxon>Deltalipothrixvirus</taxon>
        <taxon>Acidianus filamentous virus 2</taxon>
    </lineage>
</organism>
<accession>Q573G1</accession>
<protein>
    <recommendedName>
        <fullName>Putative zinc finger protein ORF104b</fullName>
    </recommendedName>
</protein>
<sequence length="104" mass="12294">MKRISFKVEDELARNLDKYSMQNHLTRSEAIRQILREKLSIMQIPTDKGKVVSGIIINDEIYECKYCHTRYLSHTGIVYHLEREHNIKKPFSPHIIKIVGDKNE</sequence>
<evidence type="ECO:0000255" key="1">
    <source>
        <dbReference type="PROSITE-ProRule" id="PRU00042"/>
    </source>
</evidence>
<reference key="1">
    <citation type="journal article" date="2005" name="J. Bacteriol.">
        <title>Structure and genome organization of AFV2, a novel archaeal lipothrixvirus with unusual terminal and core structures.</title>
        <authorList>
            <person name="Haring M."/>
            <person name="Vestergaard G."/>
            <person name="Brugger K."/>
            <person name="Rachel R."/>
            <person name="Garrett R.A."/>
            <person name="Prangishvili D."/>
        </authorList>
    </citation>
    <scope>NUCLEOTIDE SEQUENCE [GENOMIC DNA]</scope>
</reference>
<feature type="chain" id="PRO_0000384483" description="Putative zinc finger protein ORF104b">
    <location>
        <begin position="1"/>
        <end position="104"/>
    </location>
</feature>
<feature type="zinc finger region" description="C2H2-type" evidence="1">
    <location>
        <begin position="62"/>
        <end position="85"/>
    </location>
</feature>
<proteinExistence type="predicted"/>
<gene>
    <name type="ORF">ORF104b</name>
</gene>